<name>YCFP_ECO57</name>
<gene>
    <name type="primary">ycfP</name>
    <name type="ordered locus">Z1747</name>
    <name type="ordered locus">ECs1486</name>
</gene>
<protein>
    <recommendedName>
        <fullName>UPF0227 protein YcfP</fullName>
    </recommendedName>
</protein>
<evidence type="ECO:0000305" key="1"/>
<accession>P0A8E3</accession>
<accession>P75950</accession>
<keyword id="KW-1185">Reference proteome</keyword>
<organism>
    <name type="scientific">Escherichia coli O157:H7</name>
    <dbReference type="NCBI Taxonomy" id="83334"/>
    <lineage>
        <taxon>Bacteria</taxon>
        <taxon>Pseudomonadati</taxon>
        <taxon>Pseudomonadota</taxon>
        <taxon>Gammaproteobacteria</taxon>
        <taxon>Enterobacterales</taxon>
        <taxon>Enterobacteriaceae</taxon>
        <taxon>Escherichia</taxon>
    </lineage>
</organism>
<reference key="1">
    <citation type="journal article" date="2001" name="Nature">
        <title>Genome sequence of enterohaemorrhagic Escherichia coli O157:H7.</title>
        <authorList>
            <person name="Perna N.T."/>
            <person name="Plunkett G. III"/>
            <person name="Burland V."/>
            <person name="Mau B."/>
            <person name="Glasner J.D."/>
            <person name="Rose D.J."/>
            <person name="Mayhew G.F."/>
            <person name="Evans P.S."/>
            <person name="Gregor J."/>
            <person name="Kirkpatrick H.A."/>
            <person name="Posfai G."/>
            <person name="Hackett J."/>
            <person name="Klink S."/>
            <person name="Boutin A."/>
            <person name="Shao Y."/>
            <person name="Miller L."/>
            <person name="Grotbeck E.J."/>
            <person name="Davis N.W."/>
            <person name="Lim A."/>
            <person name="Dimalanta E.T."/>
            <person name="Potamousis K."/>
            <person name="Apodaca J."/>
            <person name="Anantharaman T.S."/>
            <person name="Lin J."/>
            <person name="Yen G."/>
            <person name="Schwartz D.C."/>
            <person name="Welch R.A."/>
            <person name="Blattner F.R."/>
        </authorList>
    </citation>
    <scope>NUCLEOTIDE SEQUENCE [LARGE SCALE GENOMIC DNA]</scope>
    <source>
        <strain>O157:H7 / EDL933 / ATCC 700927 / EHEC</strain>
    </source>
</reference>
<reference key="2">
    <citation type="journal article" date="2001" name="DNA Res.">
        <title>Complete genome sequence of enterohemorrhagic Escherichia coli O157:H7 and genomic comparison with a laboratory strain K-12.</title>
        <authorList>
            <person name="Hayashi T."/>
            <person name="Makino K."/>
            <person name="Ohnishi M."/>
            <person name="Kurokawa K."/>
            <person name="Ishii K."/>
            <person name="Yokoyama K."/>
            <person name="Han C.-G."/>
            <person name="Ohtsubo E."/>
            <person name="Nakayama K."/>
            <person name="Murata T."/>
            <person name="Tanaka M."/>
            <person name="Tobe T."/>
            <person name="Iida T."/>
            <person name="Takami H."/>
            <person name="Honda T."/>
            <person name="Sasakawa C."/>
            <person name="Ogasawara N."/>
            <person name="Yasunaga T."/>
            <person name="Kuhara S."/>
            <person name="Shiba T."/>
            <person name="Hattori M."/>
            <person name="Shinagawa H."/>
        </authorList>
    </citation>
    <scope>NUCLEOTIDE SEQUENCE [LARGE SCALE GENOMIC DNA]</scope>
    <source>
        <strain>O157:H7 / Sakai / RIMD 0509952 / EHEC</strain>
    </source>
</reference>
<dbReference type="EMBL" id="AE005174">
    <property type="protein sequence ID" value="AAG55854.1"/>
    <property type="status" value="ALT_INIT"/>
    <property type="molecule type" value="Genomic_DNA"/>
</dbReference>
<dbReference type="EMBL" id="BA000007">
    <property type="protein sequence ID" value="BAB34909.2"/>
    <property type="molecule type" value="Genomic_DNA"/>
</dbReference>
<dbReference type="RefSeq" id="NP_309513.2">
    <property type="nucleotide sequence ID" value="NC_002695.1"/>
</dbReference>
<dbReference type="RefSeq" id="WP_000587933.1">
    <property type="nucleotide sequence ID" value="NZ_VOAI01000018.1"/>
</dbReference>
<dbReference type="SMR" id="P0A8E3"/>
<dbReference type="STRING" id="155864.Z1747"/>
<dbReference type="ESTHER" id="ecoli-ycfp">
    <property type="family name" value="abh_upf00227"/>
</dbReference>
<dbReference type="GeneID" id="912679"/>
<dbReference type="GeneID" id="93776300"/>
<dbReference type="KEGG" id="ece:Z1747"/>
<dbReference type="KEGG" id="ecs:ECs_1486"/>
<dbReference type="PATRIC" id="fig|386585.9.peg.1587"/>
<dbReference type="eggNOG" id="COG3150">
    <property type="taxonomic scope" value="Bacteria"/>
</dbReference>
<dbReference type="HOGENOM" id="CLU_128769_0_0_6"/>
<dbReference type="OMA" id="KCVSEFR"/>
<dbReference type="Proteomes" id="UP000000558">
    <property type="component" value="Chromosome"/>
</dbReference>
<dbReference type="Proteomes" id="UP000002519">
    <property type="component" value="Chromosome"/>
</dbReference>
<dbReference type="FunFam" id="3.40.50.1820:FF:000007">
    <property type="entry name" value="UPF0227 protein YcfP"/>
    <property type="match status" value="1"/>
</dbReference>
<dbReference type="Gene3D" id="3.40.50.1820">
    <property type="entry name" value="alpha/beta hydrolase"/>
    <property type="match status" value="1"/>
</dbReference>
<dbReference type="HAMAP" id="MF_01047">
    <property type="entry name" value="UPF0227"/>
    <property type="match status" value="1"/>
</dbReference>
<dbReference type="InterPro" id="IPR029058">
    <property type="entry name" value="AB_hydrolase_fold"/>
</dbReference>
<dbReference type="InterPro" id="IPR022987">
    <property type="entry name" value="UPF0227"/>
</dbReference>
<dbReference type="InterPro" id="IPR008886">
    <property type="entry name" value="UPF0227/Esterase_YqiA"/>
</dbReference>
<dbReference type="NCBIfam" id="NF003431">
    <property type="entry name" value="PRK04940.1"/>
    <property type="match status" value="1"/>
</dbReference>
<dbReference type="PANTHER" id="PTHR35602">
    <property type="entry name" value="ESTERASE YQIA-RELATED"/>
    <property type="match status" value="1"/>
</dbReference>
<dbReference type="PANTHER" id="PTHR35602:SF2">
    <property type="entry name" value="UPF0227 PROTEIN YCFP"/>
    <property type="match status" value="1"/>
</dbReference>
<dbReference type="Pfam" id="PF05728">
    <property type="entry name" value="UPF0227"/>
    <property type="match status" value="1"/>
</dbReference>
<dbReference type="SUPFAM" id="SSF53474">
    <property type="entry name" value="alpha/beta-Hydrolases"/>
    <property type="match status" value="1"/>
</dbReference>
<proteinExistence type="inferred from homology"/>
<feature type="chain" id="PRO_0000070318" description="UPF0227 protein YcfP">
    <location>
        <begin position="1"/>
        <end position="180"/>
    </location>
</feature>
<sequence>MIIYLHGFDSNSPGNHEKVLQLQFIDPDVRLISYSTRHPKHDMQHLLKEVDKMLQLNVDERPLICGVGLGGYWAERIGFLCDIRQVIFNPNLFPYENMEGKIDRPEEYADIATKCVTNFREKNRDRCLVILSRNDEALNSQRTSEELHHYYEIVWDEEQTHKFKNISPHLQRIKAFKTLG</sequence>
<comment type="similarity">
    <text evidence="1">Belongs to the UPF0227 family.</text>
</comment>
<comment type="sequence caution" evidence="1">
    <conflict type="erroneous initiation">
        <sequence resource="EMBL-CDS" id="AAG55854"/>
    </conflict>
    <text>Extended N-terminus.</text>
</comment>